<comment type="function">
    <text>Inhibitory regulator of the Ras-cyclic AMP pathway. May bind inositol tetrakisphosphate (IP4).</text>
</comment>
<comment type="tissue specificity">
    <text>High levels in brain, lower in spleen and lung.</text>
</comment>
<feature type="initiator methionine" description="Removed" evidence="1">
    <location>
        <position position="1"/>
    </location>
</feature>
<feature type="chain" id="PRO_0000056643" description="Ras GTPase-activating protein 3">
    <location>
        <begin position="2"/>
        <end position="834"/>
    </location>
</feature>
<feature type="domain" description="C2 1" evidence="2">
    <location>
        <begin position="1"/>
        <end position="112"/>
    </location>
</feature>
<feature type="domain" description="C2 2" evidence="2">
    <location>
        <begin position="123"/>
        <end position="263"/>
    </location>
</feature>
<feature type="domain" description="Ras-GAP" evidence="4">
    <location>
        <begin position="346"/>
        <end position="561"/>
    </location>
</feature>
<feature type="domain" description="PH" evidence="3">
    <location>
        <begin position="576"/>
        <end position="677"/>
    </location>
</feature>
<feature type="zinc finger region" description="Btk-type" evidence="5">
    <location>
        <begin position="679"/>
        <end position="715"/>
    </location>
</feature>
<feature type="binding site" evidence="5">
    <location>
        <position position="687"/>
    </location>
    <ligand>
        <name>Zn(2+)</name>
        <dbReference type="ChEBI" id="CHEBI:29105"/>
    </ligand>
</feature>
<feature type="binding site" evidence="5">
    <location>
        <position position="698"/>
    </location>
    <ligand>
        <name>Zn(2+)</name>
        <dbReference type="ChEBI" id="CHEBI:29105"/>
    </ligand>
</feature>
<feature type="binding site" evidence="5">
    <location>
        <position position="699"/>
    </location>
    <ligand>
        <name>Zn(2+)</name>
        <dbReference type="ChEBI" id="CHEBI:29105"/>
    </ligand>
</feature>
<feature type="binding site" evidence="5">
    <location>
        <position position="709"/>
    </location>
    <ligand>
        <name>Zn(2+)</name>
        <dbReference type="ChEBI" id="CHEBI:29105"/>
    </ligand>
</feature>
<feature type="site" description="Arginine finger; crucial for GTP hydrolysis by stabilizing the transition state" evidence="4">
    <location>
        <position position="371"/>
    </location>
</feature>
<feature type="modified residue" description="N-acetylalanine" evidence="1">
    <location>
        <position position="2"/>
    </location>
</feature>
<feature type="modified residue" description="Phosphotyrosine" evidence="7">
    <location>
        <position position="66"/>
    </location>
</feature>
<feature type="modified residue" description="Phosphoserine" evidence="9">
    <location>
        <position position="77"/>
    </location>
</feature>
<feature type="modified residue" description="Phosphothreonine" evidence="1">
    <location>
        <position position="110"/>
    </location>
</feature>
<feature type="modified residue" description="Phosphoserine" evidence="8">
    <location>
        <position position="809"/>
    </location>
</feature>
<feature type="modified residue" description="Phosphoserine" evidence="8">
    <location>
        <position position="833"/>
    </location>
</feature>
<feature type="sequence conflict" description="In Ref. 1; AAA93008." evidence="6" ref="1">
    <original>D</original>
    <variation>H</variation>
    <location>
        <position position="139"/>
    </location>
</feature>
<proteinExistence type="evidence at protein level"/>
<organism>
    <name type="scientific">Mus musculus</name>
    <name type="common">Mouse</name>
    <dbReference type="NCBI Taxonomy" id="10090"/>
    <lineage>
        <taxon>Eukaryota</taxon>
        <taxon>Metazoa</taxon>
        <taxon>Chordata</taxon>
        <taxon>Craniata</taxon>
        <taxon>Vertebrata</taxon>
        <taxon>Euteleostomi</taxon>
        <taxon>Mammalia</taxon>
        <taxon>Eutheria</taxon>
        <taxon>Euarchontoglires</taxon>
        <taxon>Glires</taxon>
        <taxon>Rodentia</taxon>
        <taxon>Myomorpha</taxon>
        <taxon>Muroidea</taxon>
        <taxon>Muridae</taxon>
        <taxon>Murinae</taxon>
        <taxon>Mus</taxon>
        <taxon>Mus</taxon>
    </lineage>
</organism>
<gene>
    <name type="primary">Rasa3</name>
</gene>
<dbReference type="EMBL" id="U20238">
    <property type="protein sequence ID" value="AAA93008.1"/>
    <property type="molecule type" value="mRNA"/>
</dbReference>
<dbReference type="EMBL" id="AB052362">
    <property type="protein sequence ID" value="BAB55802.1"/>
    <property type="molecule type" value="Genomic_DNA"/>
</dbReference>
<dbReference type="EMBL" id="AK141511">
    <property type="protein sequence ID" value="BAE24707.1"/>
    <property type="molecule type" value="mRNA"/>
</dbReference>
<dbReference type="EMBL" id="CH466566">
    <property type="protein sequence ID" value="EDL22155.1"/>
    <property type="molecule type" value="Genomic_DNA"/>
</dbReference>
<dbReference type="EMBL" id="BC057300">
    <property type="protein sequence ID" value="AAH57300.2"/>
    <property type="molecule type" value="mRNA"/>
</dbReference>
<dbReference type="EMBL" id="BC068297">
    <property type="protein sequence ID" value="AAH68297.1"/>
    <property type="molecule type" value="mRNA"/>
</dbReference>
<dbReference type="CCDS" id="CCDS40234.1"/>
<dbReference type="RefSeq" id="NP_033051.2">
    <property type="nucleotide sequence ID" value="NM_009025.2"/>
</dbReference>
<dbReference type="SMR" id="Q60790"/>
<dbReference type="BioGRID" id="202597">
    <property type="interactions" value="1"/>
</dbReference>
<dbReference type="FunCoup" id="Q60790">
    <property type="interactions" value="408"/>
</dbReference>
<dbReference type="STRING" id="10090.ENSMUSP00000112998"/>
<dbReference type="GlyGen" id="Q60790">
    <property type="glycosylation" value="2 sites, 1 O-linked glycan (2 sites)"/>
</dbReference>
<dbReference type="iPTMnet" id="Q60790"/>
<dbReference type="PhosphoSitePlus" id="Q60790"/>
<dbReference type="jPOST" id="Q60790"/>
<dbReference type="PaxDb" id="10090-ENSMUSP00000112998"/>
<dbReference type="ProteomicsDB" id="253171"/>
<dbReference type="Pumba" id="Q60790"/>
<dbReference type="Antibodypedia" id="26027">
    <property type="antibodies" value="286 antibodies from 32 providers"/>
</dbReference>
<dbReference type="DNASU" id="19414"/>
<dbReference type="Ensembl" id="ENSMUST00000117551.4">
    <property type="protein sequence ID" value="ENSMUSP00000112998.3"/>
    <property type="gene ID" value="ENSMUSG00000031453.17"/>
</dbReference>
<dbReference type="GeneID" id="19414"/>
<dbReference type="KEGG" id="mmu:19414"/>
<dbReference type="UCSC" id="uc009kye.1">
    <property type="organism name" value="mouse"/>
</dbReference>
<dbReference type="AGR" id="MGI:1197013"/>
<dbReference type="CTD" id="22821"/>
<dbReference type="MGI" id="MGI:1197013">
    <property type="gene designation" value="Rasa3"/>
</dbReference>
<dbReference type="VEuPathDB" id="HostDB:ENSMUSG00000031453"/>
<dbReference type="eggNOG" id="KOG2059">
    <property type="taxonomic scope" value="Eukaryota"/>
</dbReference>
<dbReference type="GeneTree" id="ENSGT00940000157953"/>
<dbReference type="HOGENOM" id="CLU_008096_1_1_1"/>
<dbReference type="InParanoid" id="Q60790"/>
<dbReference type="OMA" id="CKEEYMA"/>
<dbReference type="OrthoDB" id="1562946at2759"/>
<dbReference type="PhylomeDB" id="Q60790"/>
<dbReference type="TreeFam" id="TF105302"/>
<dbReference type="Reactome" id="R-MMU-5658442">
    <property type="pathway name" value="Regulation of RAS by GAPs"/>
</dbReference>
<dbReference type="BioGRID-ORCS" id="19414">
    <property type="hits" value="2 hits in 78 CRISPR screens"/>
</dbReference>
<dbReference type="CD-CODE" id="CE726F99">
    <property type="entry name" value="Postsynaptic density"/>
</dbReference>
<dbReference type="PRO" id="PR:Q60790"/>
<dbReference type="Proteomes" id="UP000000589">
    <property type="component" value="Chromosome 8"/>
</dbReference>
<dbReference type="RNAct" id="Q60790">
    <property type="molecule type" value="protein"/>
</dbReference>
<dbReference type="Bgee" id="ENSMUSG00000031453">
    <property type="expression patterns" value="Expressed in gonadal fat pad and 266 other cell types or tissues"/>
</dbReference>
<dbReference type="ExpressionAtlas" id="Q60790">
    <property type="expression patterns" value="baseline and differential"/>
</dbReference>
<dbReference type="GO" id="GO:0009898">
    <property type="term" value="C:cytoplasmic side of plasma membrane"/>
    <property type="evidence" value="ECO:0007669"/>
    <property type="project" value="Ensembl"/>
</dbReference>
<dbReference type="GO" id="GO:0005246">
    <property type="term" value="F:calcium channel regulator activity"/>
    <property type="evidence" value="ECO:0007669"/>
    <property type="project" value="Ensembl"/>
</dbReference>
<dbReference type="GO" id="GO:0005096">
    <property type="term" value="F:GTPase activator activity"/>
    <property type="evidence" value="ECO:0007669"/>
    <property type="project" value="UniProtKB-KW"/>
</dbReference>
<dbReference type="GO" id="GO:0008270">
    <property type="term" value="F:zinc ion binding"/>
    <property type="evidence" value="ECO:0007669"/>
    <property type="project" value="UniProtKB-KW"/>
</dbReference>
<dbReference type="GO" id="GO:0034605">
    <property type="term" value="P:cellular response to heat"/>
    <property type="evidence" value="ECO:0000266"/>
    <property type="project" value="MGI"/>
</dbReference>
<dbReference type="GO" id="GO:0035556">
    <property type="term" value="P:intracellular signal transduction"/>
    <property type="evidence" value="ECO:0007669"/>
    <property type="project" value="InterPro"/>
</dbReference>
<dbReference type="GO" id="GO:0046580">
    <property type="term" value="P:negative regulation of Ras protein signal transduction"/>
    <property type="evidence" value="ECO:0007669"/>
    <property type="project" value="InterPro"/>
</dbReference>
<dbReference type="GO" id="GO:0030168">
    <property type="term" value="P:platelet activation"/>
    <property type="evidence" value="ECO:0007669"/>
    <property type="project" value="Ensembl"/>
</dbReference>
<dbReference type="CDD" id="cd08401">
    <property type="entry name" value="C2A_RasA2_RasA3"/>
    <property type="match status" value="1"/>
</dbReference>
<dbReference type="CDD" id="cd04010">
    <property type="entry name" value="C2B_RasA3"/>
    <property type="match status" value="1"/>
</dbReference>
<dbReference type="CDD" id="cd13371">
    <property type="entry name" value="PH_GAP1_mammal-like"/>
    <property type="match status" value="1"/>
</dbReference>
<dbReference type="CDD" id="cd05134">
    <property type="entry name" value="RasGAP_RASA3"/>
    <property type="match status" value="1"/>
</dbReference>
<dbReference type="FunFam" id="1.10.506.10:FF:000011">
    <property type="entry name" value="Ras GTPase-activating protein 2 isoform 3"/>
    <property type="match status" value="1"/>
</dbReference>
<dbReference type="FunFam" id="2.30.29.30:FF:000144">
    <property type="entry name" value="Ras GTPase-activating protein 2 isoform 3"/>
    <property type="match status" value="1"/>
</dbReference>
<dbReference type="FunFam" id="2.60.40.150:FF:000086">
    <property type="entry name" value="Ras GTPase-activating protein 2 isoform 3"/>
    <property type="match status" value="1"/>
</dbReference>
<dbReference type="FunFam" id="2.60.40.150:FF:000144">
    <property type="entry name" value="RAS p21 protein activator 3"/>
    <property type="match status" value="1"/>
</dbReference>
<dbReference type="Gene3D" id="2.60.40.150">
    <property type="entry name" value="C2 domain"/>
    <property type="match status" value="2"/>
</dbReference>
<dbReference type="Gene3D" id="1.10.506.10">
    <property type="entry name" value="GTPase Activation - p120gap, domain 1"/>
    <property type="match status" value="2"/>
</dbReference>
<dbReference type="Gene3D" id="2.30.29.30">
    <property type="entry name" value="Pleckstrin-homology domain (PH domain)/Phosphotyrosine-binding domain (PTB)"/>
    <property type="match status" value="1"/>
</dbReference>
<dbReference type="InterPro" id="IPR000008">
    <property type="entry name" value="C2_dom"/>
</dbReference>
<dbReference type="InterPro" id="IPR035892">
    <property type="entry name" value="C2_domain_sf"/>
</dbReference>
<dbReference type="InterPro" id="IPR011993">
    <property type="entry name" value="PH-like_dom_sf"/>
</dbReference>
<dbReference type="InterPro" id="IPR001849">
    <property type="entry name" value="PH_domain"/>
</dbReference>
<dbReference type="InterPro" id="IPR039360">
    <property type="entry name" value="Ras_GTPase"/>
</dbReference>
<dbReference type="InterPro" id="IPR037774">
    <property type="entry name" value="RASA3_PH"/>
</dbReference>
<dbReference type="InterPro" id="IPR023152">
    <property type="entry name" value="RasGAP_CS"/>
</dbReference>
<dbReference type="InterPro" id="IPR001936">
    <property type="entry name" value="RasGAP_dom"/>
</dbReference>
<dbReference type="InterPro" id="IPR008936">
    <property type="entry name" value="Rho_GTPase_activation_prot"/>
</dbReference>
<dbReference type="InterPro" id="IPR001562">
    <property type="entry name" value="Znf_Btk_motif"/>
</dbReference>
<dbReference type="PANTHER" id="PTHR10194:SF53">
    <property type="entry name" value="RAS GTPASE-ACTIVATING PROTEIN 3"/>
    <property type="match status" value="1"/>
</dbReference>
<dbReference type="PANTHER" id="PTHR10194">
    <property type="entry name" value="RAS GTPASE-ACTIVATING PROTEINS"/>
    <property type="match status" value="1"/>
</dbReference>
<dbReference type="Pfam" id="PF00779">
    <property type="entry name" value="BTK"/>
    <property type="match status" value="1"/>
</dbReference>
<dbReference type="Pfam" id="PF00168">
    <property type="entry name" value="C2"/>
    <property type="match status" value="2"/>
</dbReference>
<dbReference type="Pfam" id="PF00169">
    <property type="entry name" value="PH"/>
    <property type="match status" value="1"/>
</dbReference>
<dbReference type="Pfam" id="PF00616">
    <property type="entry name" value="RasGAP"/>
    <property type="match status" value="2"/>
</dbReference>
<dbReference type="SMART" id="SM00107">
    <property type="entry name" value="BTK"/>
    <property type="match status" value="1"/>
</dbReference>
<dbReference type="SMART" id="SM00239">
    <property type="entry name" value="C2"/>
    <property type="match status" value="2"/>
</dbReference>
<dbReference type="SMART" id="SM00233">
    <property type="entry name" value="PH"/>
    <property type="match status" value="1"/>
</dbReference>
<dbReference type="SMART" id="SM00323">
    <property type="entry name" value="RasGAP"/>
    <property type="match status" value="1"/>
</dbReference>
<dbReference type="SUPFAM" id="SSF49562">
    <property type="entry name" value="C2 domain (Calcium/lipid-binding domain, CaLB)"/>
    <property type="match status" value="2"/>
</dbReference>
<dbReference type="SUPFAM" id="SSF48350">
    <property type="entry name" value="GTPase activation domain, GAP"/>
    <property type="match status" value="1"/>
</dbReference>
<dbReference type="SUPFAM" id="SSF50729">
    <property type="entry name" value="PH domain-like"/>
    <property type="match status" value="1"/>
</dbReference>
<dbReference type="PROSITE" id="PS50004">
    <property type="entry name" value="C2"/>
    <property type="match status" value="2"/>
</dbReference>
<dbReference type="PROSITE" id="PS50003">
    <property type="entry name" value="PH_DOMAIN"/>
    <property type="match status" value="1"/>
</dbReference>
<dbReference type="PROSITE" id="PS00509">
    <property type="entry name" value="RAS_GTPASE_ACTIV_1"/>
    <property type="match status" value="1"/>
</dbReference>
<dbReference type="PROSITE" id="PS50018">
    <property type="entry name" value="RAS_GTPASE_ACTIV_2"/>
    <property type="match status" value="1"/>
</dbReference>
<dbReference type="PROSITE" id="PS51113">
    <property type="entry name" value="ZF_BTK"/>
    <property type="match status" value="1"/>
</dbReference>
<accession>Q60790</accession>
<accession>Q6PG24</accession>
<accession>Q925V1</accession>
<keyword id="KW-0007">Acetylation</keyword>
<keyword id="KW-0343">GTPase activation</keyword>
<keyword id="KW-0479">Metal-binding</keyword>
<keyword id="KW-0597">Phosphoprotein</keyword>
<keyword id="KW-1185">Reference proteome</keyword>
<keyword id="KW-0677">Repeat</keyword>
<keyword id="KW-0862">Zinc</keyword>
<keyword id="KW-0863">Zinc-finger</keyword>
<sequence length="834" mass="95987">MAVEEEGLRVFQSVRIKIGEAKNLPSYPGPNKMRDCYCTVNLDQEEVFRTKIVEKSLCPFYGEDFYCEIPRSFRHLSFYIFDRDVFRRDSIIGKVAIQKEDLQRYHNRDTWFQLQHVDADSEVQGKVHLELRLSEVITDTGVVCHKLAARIFECQGLPIVNGQCDPYATVTLAGPFRSEAKKTKVKKKTNNPQFDEVFYFEVTRPCSYSKKSHFDFEEEDVDKLEIRVDLWNASNLKFGDEFLGELRLPLKILRHSSSYEAWYFLQPRDNGNKSLKPDDLGSLRLNVVYTEDHVFSSEYYSPLRDLLLKSADVEPVSASAAHILGEVCRDKQEAAIPLVRLLLHYGRVVPFISAIASAEVKRTQDPNTIFRGNSLTSKCIDETMKLAGMHYLHVTLKPTIEEICQSHKSCEIDPVKLKDGENLENNMESLRQYVDRIFTVITKSGVSCPTVMCDIFFSLREAAAKRFQDDLDVRYTAVSSFIFLRFFAPAILSPNLFQLTPHHTDPQTSRTLTLISKTIQTLGSLSKSKSASFKESYMATFYEFFNEQKYADAVKNFLDLISSSGRRDPKSIEQPILLKEGFMIKRAQGRKRFGMKNFKKRWFRLTNHEFTYQKSKGDQPLCNIPIENILAVERLEEESFRMKNMFQVIQPERALYIQANNCVEAKDWIDILTKVSQCNQKRLTVFHPSAYLNGHWLCCRASSDTAAGCTPCTGGLPANIQLDIDGDRETERIYSLFNLYMGKLEKMQEACGSKSVYDGPEQEEYSTFVIDDPQETYKTLKQVIAGVGTLEQEHAQYRRDKFKKTRYGSQEHPIGDKSFQNYIRQQSEISTHSI</sequence>
<name>RASA3_MOUSE</name>
<reference key="1">
    <citation type="journal article" date="1995" name="J. Neurosci. Res.">
        <title>GapIII, a new brain-enriched member of the GTPase-activating protein family.</title>
        <authorList>
            <person name="Baba H."/>
            <person name="Fuss B."/>
            <person name="Urano J."/>
            <person name="Poullet P."/>
            <person name="Watson J.B."/>
            <person name="Tamanoi F."/>
            <person name="Macklin W.B."/>
        </authorList>
    </citation>
    <scope>NUCLEOTIDE SEQUENCE [MRNA]</scope>
    <source>
        <strain>C57BL/6J</strain>
        <tissue>Brain</tissue>
    </source>
</reference>
<reference key="2">
    <citation type="submission" date="2000-12" db="EMBL/GenBank/DDBJ databases">
        <title>Murine R ras GAP cDNA construct.</title>
        <authorList>
            <person name="Iwashita S."/>
            <person name="Sezaki M."/>
        </authorList>
    </citation>
    <scope>NUCLEOTIDE SEQUENCE [GENOMIC DNA]</scope>
</reference>
<reference key="3">
    <citation type="journal article" date="2005" name="Science">
        <title>The transcriptional landscape of the mammalian genome.</title>
        <authorList>
            <person name="Carninci P."/>
            <person name="Kasukawa T."/>
            <person name="Katayama S."/>
            <person name="Gough J."/>
            <person name="Frith M.C."/>
            <person name="Maeda N."/>
            <person name="Oyama R."/>
            <person name="Ravasi T."/>
            <person name="Lenhard B."/>
            <person name="Wells C."/>
            <person name="Kodzius R."/>
            <person name="Shimokawa K."/>
            <person name="Bajic V.B."/>
            <person name="Brenner S.E."/>
            <person name="Batalov S."/>
            <person name="Forrest A.R."/>
            <person name="Zavolan M."/>
            <person name="Davis M.J."/>
            <person name="Wilming L.G."/>
            <person name="Aidinis V."/>
            <person name="Allen J.E."/>
            <person name="Ambesi-Impiombato A."/>
            <person name="Apweiler R."/>
            <person name="Aturaliya R.N."/>
            <person name="Bailey T.L."/>
            <person name="Bansal M."/>
            <person name="Baxter L."/>
            <person name="Beisel K.W."/>
            <person name="Bersano T."/>
            <person name="Bono H."/>
            <person name="Chalk A.M."/>
            <person name="Chiu K.P."/>
            <person name="Choudhary V."/>
            <person name="Christoffels A."/>
            <person name="Clutterbuck D.R."/>
            <person name="Crowe M.L."/>
            <person name="Dalla E."/>
            <person name="Dalrymple B.P."/>
            <person name="de Bono B."/>
            <person name="Della Gatta G."/>
            <person name="di Bernardo D."/>
            <person name="Down T."/>
            <person name="Engstrom P."/>
            <person name="Fagiolini M."/>
            <person name="Faulkner G."/>
            <person name="Fletcher C.F."/>
            <person name="Fukushima T."/>
            <person name="Furuno M."/>
            <person name="Futaki S."/>
            <person name="Gariboldi M."/>
            <person name="Georgii-Hemming P."/>
            <person name="Gingeras T.R."/>
            <person name="Gojobori T."/>
            <person name="Green R.E."/>
            <person name="Gustincich S."/>
            <person name="Harbers M."/>
            <person name="Hayashi Y."/>
            <person name="Hensch T.K."/>
            <person name="Hirokawa N."/>
            <person name="Hill D."/>
            <person name="Huminiecki L."/>
            <person name="Iacono M."/>
            <person name="Ikeo K."/>
            <person name="Iwama A."/>
            <person name="Ishikawa T."/>
            <person name="Jakt M."/>
            <person name="Kanapin A."/>
            <person name="Katoh M."/>
            <person name="Kawasawa Y."/>
            <person name="Kelso J."/>
            <person name="Kitamura H."/>
            <person name="Kitano H."/>
            <person name="Kollias G."/>
            <person name="Krishnan S.P."/>
            <person name="Kruger A."/>
            <person name="Kummerfeld S.K."/>
            <person name="Kurochkin I.V."/>
            <person name="Lareau L.F."/>
            <person name="Lazarevic D."/>
            <person name="Lipovich L."/>
            <person name="Liu J."/>
            <person name="Liuni S."/>
            <person name="McWilliam S."/>
            <person name="Madan Babu M."/>
            <person name="Madera M."/>
            <person name="Marchionni L."/>
            <person name="Matsuda H."/>
            <person name="Matsuzawa S."/>
            <person name="Miki H."/>
            <person name="Mignone F."/>
            <person name="Miyake S."/>
            <person name="Morris K."/>
            <person name="Mottagui-Tabar S."/>
            <person name="Mulder N."/>
            <person name="Nakano N."/>
            <person name="Nakauchi H."/>
            <person name="Ng P."/>
            <person name="Nilsson R."/>
            <person name="Nishiguchi S."/>
            <person name="Nishikawa S."/>
            <person name="Nori F."/>
            <person name="Ohara O."/>
            <person name="Okazaki Y."/>
            <person name="Orlando V."/>
            <person name="Pang K.C."/>
            <person name="Pavan W.J."/>
            <person name="Pavesi G."/>
            <person name="Pesole G."/>
            <person name="Petrovsky N."/>
            <person name="Piazza S."/>
            <person name="Reed J."/>
            <person name="Reid J.F."/>
            <person name="Ring B.Z."/>
            <person name="Ringwald M."/>
            <person name="Rost B."/>
            <person name="Ruan Y."/>
            <person name="Salzberg S.L."/>
            <person name="Sandelin A."/>
            <person name="Schneider C."/>
            <person name="Schoenbach C."/>
            <person name="Sekiguchi K."/>
            <person name="Semple C.A."/>
            <person name="Seno S."/>
            <person name="Sessa L."/>
            <person name="Sheng Y."/>
            <person name="Shibata Y."/>
            <person name="Shimada H."/>
            <person name="Shimada K."/>
            <person name="Silva D."/>
            <person name="Sinclair B."/>
            <person name="Sperling S."/>
            <person name="Stupka E."/>
            <person name="Sugiura K."/>
            <person name="Sultana R."/>
            <person name="Takenaka Y."/>
            <person name="Taki K."/>
            <person name="Tammoja K."/>
            <person name="Tan S.L."/>
            <person name="Tang S."/>
            <person name="Taylor M.S."/>
            <person name="Tegner J."/>
            <person name="Teichmann S.A."/>
            <person name="Ueda H.R."/>
            <person name="van Nimwegen E."/>
            <person name="Verardo R."/>
            <person name="Wei C.L."/>
            <person name="Yagi K."/>
            <person name="Yamanishi H."/>
            <person name="Zabarovsky E."/>
            <person name="Zhu S."/>
            <person name="Zimmer A."/>
            <person name="Hide W."/>
            <person name="Bult C."/>
            <person name="Grimmond S.M."/>
            <person name="Teasdale R.D."/>
            <person name="Liu E.T."/>
            <person name="Brusic V."/>
            <person name="Quackenbush J."/>
            <person name="Wahlestedt C."/>
            <person name="Mattick J.S."/>
            <person name="Hume D.A."/>
            <person name="Kai C."/>
            <person name="Sasaki D."/>
            <person name="Tomaru Y."/>
            <person name="Fukuda S."/>
            <person name="Kanamori-Katayama M."/>
            <person name="Suzuki M."/>
            <person name="Aoki J."/>
            <person name="Arakawa T."/>
            <person name="Iida J."/>
            <person name="Imamura K."/>
            <person name="Itoh M."/>
            <person name="Kato T."/>
            <person name="Kawaji H."/>
            <person name="Kawagashira N."/>
            <person name="Kawashima T."/>
            <person name="Kojima M."/>
            <person name="Kondo S."/>
            <person name="Konno H."/>
            <person name="Nakano K."/>
            <person name="Ninomiya N."/>
            <person name="Nishio T."/>
            <person name="Okada M."/>
            <person name="Plessy C."/>
            <person name="Shibata K."/>
            <person name="Shiraki T."/>
            <person name="Suzuki S."/>
            <person name="Tagami M."/>
            <person name="Waki K."/>
            <person name="Watahiki A."/>
            <person name="Okamura-Oho Y."/>
            <person name="Suzuki H."/>
            <person name="Kawai J."/>
            <person name="Hayashizaki Y."/>
        </authorList>
    </citation>
    <scope>NUCLEOTIDE SEQUENCE [LARGE SCALE MRNA]</scope>
    <source>
        <strain>C57BL/6J</strain>
        <tissue>Spinal cord</tissue>
    </source>
</reference>
<reference key="4">
    <citation type="submission" date="2005-07" db="EMBL/GenBank/DDBJ databases">
        <authorList>
            <person name="Mural R.J."/>
            <person name="Adams M.D."/>
            <person name="Myers E.W."/>
            <person name="Smith H.O."/>
            <person name="Venter J.C."/>
        </authorList>
    </citation>
    <scope>NUCLEOTIDE SEQUENCE [LARGE SCALE GENOMIC DNA]</scope>
</reference>
<reference key="5">
    <citation type="journal article" date="2004" name="Genome Res.">
        <title>The status, quality, and expansion of the NIH full-length cDNA project: the Mammalian Gene Collection (MGC).</title>
        <authorList>
            <consortium name="The MGC Project Team"/>
        </authorList>
    </citation>
    <scope>NUCLEOTIDE SEQUENCE [LARGE SCALE MRNA]</scope>
    <source>
        <strain>C57BL/6J</strain>
        <strain>CD-1</strain>
        <tissue>Brain</tissue>
        <tissue>Neural stem cell</tissue>
    </source>
</reference>
<reference key="6">
    <citation type="journal article" date="2007" name="J. Immunol.">
        <title>Quantitative time-resolved phosphoproteomic analysis of mast cell signaling.</title>
        <authorList>
            <person name="Cao L."/>
            <person name="Yu K."/>
            <person name="Banh C."/>
            <person name="Nguyen V."/>
            <person name="Ritz A."/>
            <person name="Raphael B.J."/>
            <person name="Kawakami Y."/>
            <person name="Kawakami T."/>
            <person name="Salomon A.R."/>
        </authorList>
    </citation>
    <scope>PHOSPHORYLATION [LARGE SCALE ANALYSIS] AT TYR-66</scope>
    <scope>IDENTIFICATION BY MASS SPECTROMETRY [LARGE SCALE ANALYSIS]</scope>
    <source>
        <tissue>Mast cell</tissue>
    </source>
</reference>
<reference key="7">
    <citation type="journal article" date="2009" name="Immunity">
        <title>The phagosomal proteome in interferon-gamma-activated macrophages.</title>
        <authorList>
            <person name="Trost M."/>
            <person name="English L."/>
            <person name="Lemieux S."/>
            <person name="Courcelles M."/>
            <person name="Desjardins M."/>
            <person name="Thibault P."/>
        </authorList>
    </citation>
    <scope>PHOSPHORYLATION [LARGE SCALE ANALYSIS] AT SER-809 AND SER-833</scope>
    <scope>IDENTIFICATION BY MASS SPECTROMETRY [LARGE SCALE ANALYSIS]</scope>
</reference>
<reference key="8">
    <citation type="journal article" date="2010" name="Cell">
        <title>A tissue-specific atlas of mouse protein phosphorylation and expression.</title>
        <authorList>
            <person name="Huttlin E.L."/>
            <person name="Jedrychowski M.P."/>
            <person name="Elias J.E."/>
            <person name="Goswami T."/>
            <person name="Rad R."/>
            <person name="Beausoleil S.A."/>
            <person name="Villen J."/>
            <person name="Haas W."/>
            <person name="Sowa M.E."/>
            <person name="Gygi S.P."/>
        </authorList>
    </citation>
    <scope>PHOSPHORYLATION [LARGE SCALE ANALYSIS] AT SER-77</scope>
    <scope>IDENTIFICATION BY MASS SPECTROMETRY [LARGE SCALE ANALYSIS]</scope>
    <source>
        <tissue>Brain</tissue>
        <tissue>Lung</tissue>
        <tissue>Spleen</tissue>
    </source>
</reference>
<evidence type="ECO:0000250" key="1">
    <source>
        <dbReference type="UniProtKB" id="Q14644"/>
    </source>
</evidence>
<evidence type="ECO:0000255" key="2">
    <source>
        <dbReference type="PROSITE-ProRule" id="PRU00041"/>
    </source>
</evidence>
<evidence type="ECO:0000255" key="3">
    <source>
        <dbReference type="PROSITE-ProRule" id="PRU00145"/>
    </source>
</evidence>
<evidence type="ECO:0000255" key="4">
    <source>
        <dbReference type="PROSITE-ProRule" id="PRU00167"/>
    </source>
</evidence>
<evidence type="ECO:0000255" key="5">
    <source>
        <dbReference type="PROSITE-ProRule" id="PRU00432"/>
    </source>
</evidence>
<evidence type="ECO:0000305" key="6"/>
<evidence type="ECO:0007744" key="7">
    <source>
    </source>
</evidence>
<evidence type="ECO:0007744" key="8">
    <source>
    </source>
</evidence>
<evidence type="ECO:0007744" key="9">
    <source>
    </source>
</evidence>
<protein>
    <recommendedName>
        <fullName>Ras GTPase-activating protein 3</fullName>
    </recommendedName>
    <alternativeName>
        <fullName>GAP1(IP4BP)</fullName>
    </alternativeName>
    <alternativeName>
        <fullName>GapIII</fullName>
    </alternativeName>
    <alternativeName>
        <fullName>Ins P4-binding protein</fullName>
    </alternativeName>
</protein>